<dbReference type="EC" id="3.6.1.23" evidence="1"/>
<dbReference type="EMBL" id="CP000851">
    <property type="protein sequence ID" value="ABV89149.1"/>
    <property type="molecule type" value="Genomic_DNA"/>
</dbReference>
<dbReference type="RefSeq" id="WP_012157031.1">
    <property type="nucleotide sequence ID" value="NC_009901.1"/>
</dbReference>
<dbReference type="SMR" id="A8H9B2"/>
<dbReference type="STRING" id="398579.Spea_3839"/>
<dbReference type="KEGG" id="spl:Spea_3839"/>
<dbReference type="eggNOG" id="COG0756">
    <property type="taxonomic scope" value="Bacteria"/>
</dbReference>
<dbReference type="HOGENOM" id="CLU_068508_1_1_6"/>
<dbReference type="OrthoDB" id="9809956at2"/>
<dbReference type="UniPathway" id="UPA00610">
    <property type="reaction ID" value="UER00666"/>
</dbReference>
<dbReference type="Proteomes" id="UP000002608">
    <property type="component" value="Chromosome"/>
</dbReference>
<dbReference type="GO" id="GO:0004170">
    <property type="term" value="F:dUTP diphosphatase activity"/>
    <property type="evidence" value="ECO:0007669"/>
    <property type="project" value="UniProtKB-UniRule"/>
</dbReference>
<dbReference type="GO" id="GO:0000287">
    <property type="term" value="F:magnesium ion binding"/>
    <property type="evidence" value="ECO:0007669"/>
    <property type="project" value="UniProtKB-UniRule"/>
</dbReference>
<dbReference type="GO" id="GO:0006226">
    <property type="term" value="P:dUMP biosynthetic process"/>
    <property type="evidence" value="ECO:0007669"/>
    <property type="project" value="UniProtKB-UniRule"/>
</dbReference>
<dbReference type="GO" id="GO:0046081">
    <property type="term" value="P:dUTP catabolic process"/>
    <property type="evidence" value="ECO:0007669"/>
    <property type="project" value="InterPro"/>
</dbReference>
<dbReference type="CDD" id="cd07557">
    <property type="entry name" value="trimeric_dUTPase"/>
    <property type="match status" value="1"/>
</dbReference>
<dbReference type="FunFam" id="2.70.40.10:FF:000002">
    <property type="entry name" value="dUTP diphosphatase"/>
    <property type="match status" value="1"/>
</dbReference>
<dbReference type="Gene3D" id="2.70.40.10">
    <property type="match status" value="1"/>
</dbReference>
<dbReference type="HAMAP" id="MF_00116">
    <property type="entry name" value="dUTPase_bact"/>
    <property type="match status" value="1"/>
</dbReference>
<dbReference type="InterPro" id="IPR008181">
    <property type="entry name" value="dUTPase"/>
</dbReference>
<dbReference type="InterPro" id="IPR029054">
    <property type="entry name" value="dUTPase-like"/>
</dbReference>
<dbReference type="InterPro" id="IPR036157">
    <property type="entry name" value="dUTPase-like_sf"/>
</dbReference>
<dbReference type="InterPro" id="IPR033704">
    <property type="entry name" value="dUTPase_trimeric"/>
</dbReference>
<dbReference type="NCBIfam" id="TIGR00576">
    <property type="entry name" value="dut"/>
    <property type="match status" value="1"/>
</dbReference>
<dbReference type="NCBIfam" id="NF001862">
    <property type="entry name" value="PRK00601.1"/>
    <property type="match status" value="1"/>
</dbReference>
<dbReference type="PANTHER" id="PTHR11241">
    <property type="entry name" value="DEOXYURIDINE 5'-TRIPHOSPHATE NUCLEOTIDOHYDROLASE"/>
    <property type="match status" value="1"/>
</dbReference>
<dbReference type="PANTHER" id="PTHR11241:SF0">
    <property type="entry name" value="DEOXYURIDINE 5'-TRIPHOSPHATE NUCLEOTIDOHYDROLASE"/>
    <property type="match status" value="1"/>
</dbReference>
<dbReference type="Pfam" id="PF00692">
    <property type="entry name" value="dUTPase"/>
    <property type="match status" value="1"/>
</dbReference>
<dbReference type="SUPFAM" id="SSF51283">
    <property type="entry name" value="dUTPase-like"/>
    <property type="match status" value="1"/>
</dbReference>
<comment type="function">
    <text evidence="1">This enzyme is involved in nucleotide metabolism: it produces dUMP, the immediate precursor of thymidine nucleotides and it decreases the intracellular concentration of dUTP so that uracil cannot be incorporated into DNA.</text>
</comment>
<comment type="catalytic activity">
    <reaction evidence="1">
        <text>dUTP + H2O = dUMP + diphosphate + H(+)</text>
        <dbReference type="Rhea" id="RHEA:10248"/>
        <dbReference type="ChEBI" id="CHEBI:15377"/>
        <dbReference type="ChEBI" id="CHEBI:15378"/>
        <dbReference type="ChEBI" id="CHEBI:33019"/>
        <dbReference type="ChEBI" id="CHEBI:61555"/>
        <dbReference type="ChEBI" id="CHEBI:246422"/>
        <dbReference type="EC" id="3.6.1.23"/>
    </reaction>
</comment>
<comment type="cofactor">
    <cofactor evidence="1">
        <name>Mg(2+)</name>
        <dbReference type="ChEBI" id="CHEBI:18420"/>
    </cofactor>
</comment>
<comment type="pathway">
    <text evidence="1">Pyrimidine metabolism; dUMP biosynthesis; dUMP from dCTP (dUTP route): step 2/2.</text>
</comment>
<comment type="similarity">
    <text evidence="1">Belongs to the dUTPase family.</text>
</comment>
<sequence length="152" mass="16144">MKTPIELKILDSRIGTEFPLPAYATPGSAGMDLRAITDTQLVIQPGETVLIPTGIAIHVADPSLAAIILPRSGLGHKHGIVLGNLVGLIDSDYQGPLMVSCWNRGSEPFTIEIGDRLAQLVFVPVVQAEFKLVDEFNQSDRGAGGFGHSGTK</sequence>
<accession>A8H9B2</accession>
<organism>
    <name type="scientific">Shewanella pealeana (strain ATCC 700345 / ANG-SQ1)</name>
    <dbReference type="NCBI Taxonomy" id="398579"/>
    <lineage>
        <taxon>Bacteria</taxon>
        <taxon>Pseudomonadati</taxon>
        <taxon>Pseudomonadota</taxon>
        <taxon>Gammaproteobacteria</taxon>
        <taxon>Alteromonadales</taxon>
        <taxon>Shewanellaceae</taxon>
        <taxon>Shewanella</taxon>
    </lineage>
</organism>
<feature type="chain" id="PRO_1000076072" description="Deoxyuridine 5'-triphosphate nucleotidohydrolase">
    <location>
        <begin position="1"/>
        <end position="152"/>
    </location>
</feature>
<feature type="binding site" evidence="1">
    <location>
        <begin position="71"/>
        <end position="73"/>
    </location>
    <ligand>
        <name>substrate</name>
    </ligand>
</feature>
<feature type="binding site" evidence="1">
    <location>
        <position position="84"/>
    </location>
    <ligand>
        <name>substrate</name>
    </ligand>
</feature>
<feature type="binding site" evidence="1">
    <location>
        <begin position="88"/>
        <end position="90"/>
    </location>
    <ligand>
        <name>substrate</name>
    </ligand>
</feature>
<feature type="binding site" evidence="1">
    <location>
        <position position="98"/>
    </location>
    <ligand>
        <name>substrate</name>
    </ligand>
</feature>
<keyword id="KW-0378">Hydrolase</keyword>
<keyword id="KW-0460">Magnesium</keyword>
<keyword id="KW-0479">Metal-binding</keyword>
<keyword id="KW-0546">Nucleotide metabolism</keyword>
<keyword id="KW-1185">Reference proteome</keyword>
<gene>
    <name evidence="1" type="primary">dut</name>
    <name type="ordered locus">Spea_3839</name>
</gene>
<proteinExistence type="inferred from homology"/>
<evidence type="ECO:0000255" key="1">
    <source>
        <dbReference type="HAMAP-Rule" id="MF_00116"/>
    </source>
</evidence>
<reference key="1">
    <citation type="submission" date="2007-10" db="EMBL/GenBank/DDBJ databases">
        <title>Complete sequence of Shewanella pealeana ATCC 700345.</title>
        <authorList>
            <consortium name="US DOE Joint Genome Institute"/>
            <person name="Copeland A."/>
            <person name="Lucas S."/>
            <person name="Lapidus A."/>
            <person name="Barry K."/>
            <person name="Glavina del Rio T."/>
            <person name="Dalin E."/>
            <person name="Tice H."/>
            <person name="Pitluck S."/>
            <person name="Chertkov O."/>
            <person name="Brettin T."/>
            <person name="Bruce D."/>
            <person name="Detter J.C."/>
            <person name="Han C."/>
            <person name="Schmutz J."/>
            <person name="Larimer F."/>
            <person name="Land M."/>
            <person name="Hauser L."/>
            <person name="Kyrpides N."/>
            <person name="Kim E."/>
            <person name="Zhao J.-S.Z."/>
            <person name="Manno D."/>
            <person name="Hawari J."/>
            <person name="Richardson P."/>
        </authorList>
    </citation>
    <scope>NUCLEOTIDE SEQUENCE [LARGE SCALE GENOMIC DNA]</scope>
    <source>
        <strain>ATCC 700345 / ANG-SQ1</strain>
    </source>
</reference>
<name>DUT_SHEPA</name>
<protein>
    <recommendedName>
        <fullName evidence="1">Deoxyuridine 5'-triphosphate nucleotidohydrolase</fullName>
        <shortName evidence="1">dUTPase</shortName>
        <ecNumber evidence="1">3.6.1.23</ecNumber>
    </recommendedName>
    <alternativeName>
        <fullName evidence="1">dUTP pyrophosphatase</fullName>
    </alternativeName>
</protein>